<comment type="function">
    <text evidence="1">Beta toxins bind voltage-independently at site-4 of sodium channels (Nav) and shift the voltage of activation toward more negative potentials thereby affecting sodium channel activation and promoting spontaneous and repetitive firing.</text>
</comment>
<comment type="subcellular location">
    <subcellularLocation>
        <location>Secreted</location>
    </subcellularLocation>
</comment>
<comment type="tissue specificity">
    <text>Expressed by the venom gland.</text>
</comment>
<comment type="domain">
    <text evidence="3">Has the structural arrangement of an alpha-helix connected to antiparallel beta-sheets by disulfide bonds (CS-alpha/beta).</text>
</comment>
<comment type="similarity">
    <text evidence="3">Belongs to the long (4 C-C) scorpion toxin superfamily. Sodium channel inhibitor family. Beta subfamily.</text>
</comment>
<evidence type="ECO:0000250" key="1"/>
<evidence type="ECO:0000255" key="2">
    <source>
        <dbReference type="PROSITE-ProRule" id="PRU01210"/>
    </source>
</evidence>
<evidence type="ECO:0000305" key="3"/>
<name>SCX9_CENSC</name>
<keyword id="KW-1015">Disulfide bond</keyword>
<keyword id="KW-0872">Ion channel impairing toxin</keyword>
<keyword id="KW-0528">Neurotoxin</keyword>
<keyword id="KW-0964">Secreted</keyword>
<keyword id="KW-0732">Signal</keyword>
<keyword id="KW-0800">Toxin</keyword>
<keyword id="KW-0738">Voltage-gated sodium channel impairing toxin</keyword>
<accession>Q95WC9</accession>
<accession>Q95WD0</accession>
<protein>
    <recommendedName>
        <fullName>Toxin CsE9</fullName>
    </recommendedName>
    <alternativeName>
        <fullName>Neurotoxin 9</fullName>
    </alternativeName>
</protein>
<organism>
    <name type="scientific">Centruroides sculpturatus</name>
    <name type="common">Arizona bark scorpion</name>
    <dbReference type="NCBI Taxonomy" id="218467"/>
    <lineage>
        <taxon>Eukaryota</taxon>
        <taxon>Metazoa</taxon>
        <taxon>Ecdysozoa</taxon>
        <taxon>Arthropoda</taxon>
        <taxon>Chelicerata</taxon>
        <taxon>Arachnida</taxon>
        <taxon>Scorpiones</taxon>
        <taxon>Buthida</taxon>
        <taxon>Buthoidea</taxon>
        <taxon>Buthidae</taxon>
        <taxon>Centruroides</taxon>
    </lineage>
</organism>
<reference key="1">
    <citation type="journal article" date="2001" name="Toxicon">
        <title>Genes and peptides from the scorpion Centruroides sculpturatus Ewing, that recognize Na(+)-channels.</title>
        <authorList>
            <person name="Corona M."/>
            <person name="Valdez-Cruz N.A."/>
            <person name="Merino E."/>
            <person name="Zurita M."/>
            <person name="Possani L.D."/>
        </authorList>
    </citation>
    <scope>NUCLEOTIDE SEQUENCE [MRNA]</scope>
    <source>
        <tissue>Venom gland</tissue>
    </source>
</reference>
<feature type="signal peptide" evidence="1">
    <location>
        <begin position="1"/>
        <end position="19"/>
    </location>
</feature>
<feature type="chain" id="PRO_0000035292" description="Toxin CsE9">
    <location>
        <begin position="20"/>
        <end position="84"/>
    </location>
</feature>
<feature type="domain" description="LCN-type CS-alpha/beta" evidence="2">
    <location>
        <begin position="20"/>
        <end position="83"/>
    </location>
</feature>
<feature type="disulfide bond" evidence="2">
    <location>
        <begin position="31"/>
        <end position="82"/>
    </location>
</feature>
<feature type="disulfide bond" evidence="2">
    <location>
        <begin position="35"/>
        <end position="58"/>
    </location>
</feature>
<feature type="disulfide bond" evidence="2">
    <location>
        <begin position="44"/>
        <end position="63"/>
    </location>
</feature>
<feature type="disulfide bond" evidence="2">
    <location>
        <begin position="48"/>
        <end position="65"/>
    </location>
</feature>
<feature type="sequence variant" description="In CsE9.">
    <original>M</original>
    <variation>I</variation>
    <location>
        <position position="6"/>
    </location>
</feature>
<feature type="sequence variant" description="In CsE9.">
    <original>K</original>
    <variation>M</variation>
    <location>
        <position position="38"/>
    </location>
</feature>
<feature type="sequence variant" description="In CsE9.">
    <original>N</original>
    <variation>K</variation>
    <location>
        <position position="50"/>
    </location>
</feature>
<sequence length="84" mass="9261">MNSLLMITTCLILIGTVLAEDGYLFDKRKRCTLECIDKTGDKNCDRNCKNEGGSFGKCSYFACWCKGLPGITPISRTPGKTCKI</sequence>
<proteinExistence type="evidence at transcript level"/>
<dbReference type="EMBL" id="AF338451">
    <property type="protein sequence ID" value="AAL23419.1"/>
    <property type="molecule type" value="mRNA"/>
</dbReference>
<dbReference type="EMBL" id="AF338452">
    <property type="protein sequence ID" value="AAL23420.1"/>
    <property type="molecule type" value="mRNA"/>
</dbReference>
<dbReference type="SMR" id="Q95WC9"/>
<dbReference type="GO" id="GO:0005576">
    <property type="term" value="C:extracellular region"/>
    <property type="evidence" value="ECO:0007669"/>
    <property type="project" value="UniProtKB-SubCell"/>
</dbReference>
<dbReference type="GO" id="GO:0019871">
    <property type="term" value="F:sodium channel inhibitor activity"/>
    <property type="evidence" value="ECO:0007669"/>
    <property type="project" value="InterPro"/>
</dbReference>
<dbReference type="GO" id="GO:0090729">
    <property type="term" value="F:toxin activity"/>
    <property type="evidence" value="ECO:0007669"/>
    <property type="project" value="UniProtKB-KW"/>
</dbReference>
<dbReference type="CDD" id="cd23106">
    <property type="entry name" value="neurotoxins_LC_scorpion"/>
    <property type="match status" value="1"/>
</dbReference>
<dbReference type="Gene3D" id="3.30.30.10">
    <property type="entry name" value="Knottin, scorpion toxin-like"/>
    <property type="match status" value="1"/>
</dbReference>
<dbReference type="InterPro" id="IPR044062">
    <property type="entry name" value="LCN-type_CS_alpha_beta_dom"/>
</dbReference>
<dbReference type="InterPro" id="IPR036574">
    <property type="entry name" value="Scorpion_toxin-like_sf"/>
</dbReference>
<dbReference type="InterPro" id="IPR018218">
    <property type="entry name" value="Scorpion_toxinL"/>
</dbReference>
<dbReference type="InterPro" id="IPR002061">
    <property type="entry name" value="Scorpion_toxinL/defensin"/>
</dbReference>
<dbReference type="Pfam" id="PF00537">
    <property type="entry name" value="Toxin_3"/>
    <property type="match status" value="1"/>
</dbReference>
<dbReference type="PRINTS" id="PR00285">
    <property type="entry name" value="SCORPNTOXIN"/>
</dbReference>
<dbReference type="SUPFAM" id="SSF57095">
    <property type="entry name" value="Scorpion toxin-like"/>
    <property type="match status" value="1"/>
</dbReference>
<dbReference type="PROSITE" id="PS51863">
    <property type="entry name" value="LCN_CSAB"/>
    <property type="match status" value="1"/>
</dbReference>